<keyword id="KW-0028">Amino-acid biosynthesis</keyword>
<keyword id="KW-0057">Aromatic amino acid biosynthesis</keyword>
<keyword id="KW-0170">Cobalt</keyword>
<keyword id="KW-0963">Cytoplasm</keyword>
<keyword id="KW-0456">Lyase</keyword>
<keyword id="KW-0479">Metal-binding</keyword>
<keyword id="KW-0520">NAD</keyword>
<keyword id="KW-0547">Nucleotide-binding</keyword>
<keyword id="KW-0862">Zinc</keyword>
<dbReference type="EC" id="4.2.3.4" evidence="1"/>
<dbReference type="EMBL" id="BX548174">
    <property type="protein sequence ID" value="CAE19141.1"/>
    <property type="molecule type" value="Genomic_DNA"/>
</dbReference>
<dbReference type="RefSeq" id="WP_011132316.1">
    <property type="nucleotide sequence ID" value="NC_005072.1"/>
</dbReference>
<dbReference type="SMR" id="Q7V209"/>
<dbReference type="STRING" id="59919.PMM0682"/>
<dbReference type="KEGG" id="pmm:PMM0682"/>
<dbReference type="eggNOG" id="COG0337">
    <property type="taxonomic scope" value="Bacteria"/>
</dbReference>
<dbReference type="HOGENOM" id="CLU_001201_0_2_3"/>
<dbReference type="OrthoDB" id="9806583at2"/>
<dbReference type="UniPathway" id="UPA00053">
    <property type="reaction ID" value="UER00085"/>
</dbReference>
<dbReference type="Proteomes" id="UP000001026">
    <property type="component" value="Chromosome"/>
</dbReference>
<dbReference type="GO" id="GO:0005737">
    <property type="term" value="C:cytoplasm"/>
    <property type="evidence" value="ECO:0007669"/>
    <property type="project" value="UniProtKB-SubCell"/>
</dbReference>
<dbReference type="GO" id="GO:0003856">
    <property type="term" value="F:3-dehydroquinate synthase activity"/>
    <property type="evidence" value="ECO:0007669"/>
    <property type="project" value="UniProtKB-UniRule"/>
</dbReference>
<dbReference type="GO" id="GO:0046872">
    <property type="term" value="F:metal ion binding"/>
    <property type="evidence" value="ECO:0007669"/>
    <property type="project" value="UniProtKB-KW"/>
</dbReference>
<dbReference type="GO" id="GO:0000166">
    <property type="term" value="F:nucleotide binding"/>
    <property type="evidence" value="ECO:0007669"/>
    <property type="project" value="UniProtKB-KW"/>
</dbReference>
<dbReference type="GO" id="GO:0008652">
    <property type="term" value="P:amino acid biosynthetic process"/>
    <property type="evidence" value="ECO:0007669"/>
    <property type="project" value="UniProtKB-KW"/>
</dbReference>
<dbReference type="GO" id="GO:0009073">
    <property type="term" value="P:aromatic amino acid family biosynthetic process"/>
    <property type="evidence" value="ECO:0007669"/>
    <property type="project" value="UniProtKB-KW"/>
</dbReference>
<dbReference type="GO" id="GO:0009423">
    <property type="term" value="P:chorismate biosynthetic process"/>
    <property type="evidence" value="ECO:0007669"/>
    <property type="project" value="UniProtKB-UniRule"/>
</dbReference>
<dbReference type="CDD" id="cd08195">
    <property type="entry name" value="DHQS"/>
    <property type="match status" value="1"/>
</dbReference>
<dbReference type="FunFam" id="3.40.50.1970:FF:000001">
    <property type="entry name" value="3-dehydroquinate synthase"/>
    <property type="match status" value="1"/>
</dbReference>
<dbReference type="Gene3D" id="3.40.50.1970">
    <property type="match status" value="1"/>
</dbReference>
<dbReference type="Gene3D" id="1.20.1090.10">
    <property type="entry name" value="Dehydroquinate synthase-like - alpha domain"/>
    <property type="match status" value="1"/>
</dbReference>
<dbReference type="HAMAP" id="MF_00110">
    <property type="entry name" value="DHQ_synthase"/>
    <property type="match status" value="1"/>
</dbReference>
<dbReference type="InterPro" id="IPR050071">
    <property type="entry name" value="Dehydroquinate_synthase"/>
</dbReference>
<dbReference type="InterPro" id="IPR016037">
    <property type="entry name" value="DHQ_synth_AroB"/>
</dbReference>
<dbReference type="InterPro" id="IPR030963">
    <property type="entry name" value="DHQ_synth_fam"/>
</dbReference>
<dbReference type="InterPro" id="IPR030960">
    <property type="entry name" value="DHQS/DOIS_N"/>
</dbReference>
<dbReference type="InterPro" id="IPR056179">
    <property type="entry name" value="DHQS_C"/>
</dbReference>
<dbReference type="NCBIfam" id="TIGR01357">
    <property type="entry name" value="aroB"/>
    <property type="match status" value="1"/>
</dbReference>
<dbReference type="PANTHER" id="PTHR43622">
    <property type="entry name" value="3-DEHYDROQUINATE SYNTHASE"/>
    <property type="match status" value="1"/>
</dbReference>
<dbReference type="PANTHER" id="PTHR43622:SF7">
    <property type="entry name" value="3-DEHYDROQUINATE SYNTHASE, CHLOROPLASTIC"/>
    <property type="match status" value="1"/>
</dbReference>
<dbReference type="Pfam" id="PF01761">
    <property type="entry name" value="DHQ_synthase"/>
    <property type="match status" value="1"/>
</dbReference>
<dbReference type="Pfam" id="PF24621">
    <property type="entry name" value="DHQS_C"/>
    <property type="match status" value="1"/>
</dbReference>
<dbReference type="PIRSF" id="PIRSF001455">
    <property type="entry name" value="DHQ_synth"/>
    <property type="match status" value="1"/>
</dbReference>
<dbReference type="SUPFAM" id="SSF56796">
    <property type="entry name" value="Dehydroquinate synthase-like"/>
    <property type="match status" value="1"/>
</dbReference>
<gene>
    <name evidence="1" type="primary">aroB</name>
    <name type="ordered locus">PMM0682</name>
</gene>
<comment type="function">
    <text evidence="1">Catalyzes the conversion of 3-deoxy-D-arabino-heptulosonate 7-phosphate (DAHP) to dehydroquinate (DHQ).</text>
</comment>
<comment type="catalytic activity">
    <reaction evidence="1">
        <text>7-phospho-2-dehydro-3-deoxy-D-arabino-heptonate = 3-dehydroquinate + phosphate</text>
        <dbReference type="Rhea" id="RHEA:21968"/>
        <dbReference type="ChEBI" id="CHEBI:32364"/>
        <dbReference type="ChEBI" id="CHEBI:43474"/>
        <dbReference type="ChEBI" id="CHEBI:58394"/>
        <dbReference type="EC" id="4.2.3.4"/>
    </reaction>
</comment>
<comment type="cofactor">
    <cofactor evidence="1">
        <name>NAD(+)</name>
        <dbReference type="ChEBI" id="CHEBI:57540"/>
    </cofactor>
</comment>
<comment type="cofactor">
    <cofactor evidence="1">
        <name>Co(2+)</name>
        <dbReference type="ChEBI" id="CHEBI:48828"/>
    </cofactor>
    <cofactor evidence="1">
        <name>Zn(2+)</name>
        <dbReference type="ChEBI" id="CHEBI:29105"/>
    </cofactor>
    <text evidence="1">Binds 1 divalent metal cation per subunit. Can use either Co(2+) or Zn(2+).</text>
</comment>
<comment type="pathway">
    <text evidence="1">Metabolic intermediate biosynthesis; chorismate biosynthesis; chorismate from D-erythrose 4-phosphate and phosphoenolpyruvate: step 2/7.</text>
</comment>
<comment type="subcellular location">
    <subcellularLocation>
        <location evidence="1">Cytoplasm</location>
    </subcellularLocation>
</comment>
<comment type="similarity">
    <text evidence="1">Belongs to the sugar phosphate cyclases superfamily. Dehydroquinate synthase family.</text>
</comment>
<accession>Q7V209</accession>
<sequence>MHKNKILVPLSNNSYEVIIKQGLINNIGEELIRIGINSNRKILIVSNKEISTLFGRKLLNNLKKNNFNAEIFNIKAGESHKNFASLSEIFNAAFEVGLDRNSLLIALGGGIVGDVTGFAAATWLRGIEYIQIPTTLLSMVDSSVGGKTAVNHPKGKNLIGAFYQPKAVFIDPETLITLPTREFKAGMAEVIKYGVIKDKSLFEYLENEKNRDKILNLENESLIKIINKSIKTKACIVSEDEKENGIRAILNYGHSFGHVIENLCGYGEYLHGEAISIGMKIAGDIATEKNLWSKEHSLRQDHLIESYGLPIQTPKIKKNDVMKILMGDKKVRNGKMRFILPIELGEVDIFNDINESQFLKYFN</sequence>
<proteinExistence type="inferred from homology"/>
<feature type="chain" id="PRO_0000140767" description="3-dehydroquinate synthase">
    <location>
        <begin position="1"/>
        <end position="363"/>
    </location>
</feature>
<feature type="binding site" evidence="1">
    <location>
        <begin position="134"/>
        <end position="135"/>
    </location>
    <ligand>
        <name>NAD(+)</name>
        <dbReference type="ChEBI" id="CHEBI:57540"/>
    </ligand>
</feature>
<feature type="binding site" evidence="1">
    <location>
        <position position="147"/>
    </location>
    <ligand>
        <name>NAD(+)</name>
        <dbReference type="ChEBI" id="CHEBI:57540"/>
    </ligand>
</feature>
<feature type="binding site" evidence="1">
    <location>
        <position position="156"/>
    </location>
    <ligand>
        <name>NAD(+)</name>
        <dbReference type="ChEBI" id="CHEBI:57540"/>
    </ligand>
</feature>
<feature type="binding site" evidence="1">
    <location>
        <begin position="174"/>
        <end position="177"/>
    </location>
    <ligand>
        <name>NAD(+)</name>
        <dbReference type="ChEBI" id="CHEBI:57540"/>
    </ligand>
</feature>
<feature type="binding site" evidence="1">
    <location>
        <position position="189"/>
    </location>
    <ligand>
        <name>Zn(2+)</name>
        <dbReference type="ChEBI" id="CHEBI:29105"/>
    </ligand>
</feature>
<feature type="binding site" evidence="1">
    <location>
        <position position="254"/>
    </location>
    <ligand>
        <name>Zn(2+)</name>
        <dbReference type="ChEBI" id="CHEBI:29105"/>
    </ligand>
</feature>
<feature type="binding site" evidence="1">
    <location>
        <position position="271"/>
    </location>
    <ligand>
        <name>Zn(2+)</name>
        <dbReference type="ChEBI" id="CHEBI:29105"/>
    </ligand>
</feature>
<name>AROB_PROMP</name>
<organism>
    <name type="scientific">Prochlorococcus marinus subsp. pastoris (strain CCMP1986 / NIES-2087 / MED4)</name>
    <dbReference type="NCBI Taxonomy" id="59919"/>
    <lineage>
        <taxon>Bacteria</taxon>
        <taxon>Bacillati</taxon>
        <taxon>Cyanobacteriota</taxon>
        <taxon>Cyanophyceae</taxon>
        <taxon>Synechococcales</taxon>
        <taxon>Prochlorococcaceae</taxon>
        <taxon>Prochlorococcus</taxon>
    </lineage>
</organism>
<reference key="1">
    <citation type="journal article" date="2003" name="Nature">
        <title>Genome divergence in two Prochlorococcus ecotypes reflects oceanic niche differentiation.</title>
        <authorList>
            <person name="Rocap G."/>
            <person name="Larimer F.W."/>
            <person name="Lamerdin J.E."/>
            <person name="Malfatti S."/>
            <person name="Chain P."/>
            <person name="Ahlgren N.A."/>
            <person name="Arellano A."/>
            <person name="Coleman M."/>
            <person name="Hauser L."/>
            <person name="Hess W.R."/>
            <person name="Johnson Z.I."/>
            <person name="Land M.L."/>
            <person name="Lindell D."/>
            <person name="Post A.F."/>
            <person name="Regala W."/>
            <person name="Shah M."/>
            <person name="Shaw S.L."/>
            <person name="Steglich C."/>
            <person name="Sullivan M.B."/>
            <person name="Ting C.S."/>
            <person name="Tolonen A."/>
            <person name="Webb E.A."/>
            <person name="Zinser E.R."/>
            <person name="Chisholm S.W."/>
        </authorList>
    </citation>
    <scope>NUCLEOTIDE SEQUENCE [LARGE SCALE GENOMIC DNA]</scope>
    <source>
        <strain>CCMP1986 / NIES-2087 / MED4</strain>
    </source>
</reference>
<protein>
    <recommendedName>
        <fullName evidence="1">3-dehydroquinate synthase</fullName>
        <shortName evidence="1">DHQS</shortName>
        <ecNumber evidence="1">4.2.3.4</ecNumber>
    </recommendedName>
</protein>
<evidence type="ECO:0000255" key="1">
    <source>
        <dbReference type="HAMAP-Rule" id="MF_00110"/>
    </source>
</evidence>